<reference key="1">
    <citation type="journal article" date="2009" name="Proc. Natl. Acad. Sci. U.S.A.">
        <title>Biogeography of the Sulfolobus islandicus pan-genome.</title>
        <authorList>
            <person name="Reno M.L."/>
            <person name="Held N.L."/>
            <person name="Fields C.J."/>
            <person name="Burke P.V."/>
            <person name="Whitaker R.J."/>
        </authorList>
    </citation>
    <scope>NUCLEOTIDE SEQUENCE [LARGE SCALE GENOMIC DNA]</scope>
    <source>
        <strain>L.S.2.15 / Lassen #1</strain>
    </source>
</reference>
<protein>
    <recommendedName>
        <fullName evidence="1">Aspartate carbamoyltransferase regulatory chain</fullName>
    </recommendedName>
</protein>
<name>PYRI_SACI2</name>
<proteinExistence type="inferred from homology"/>
<comment type="function">
    <text evidence="1">Involved in allosteric regulation of aspartate carbamoyltransferase.</text>
</comment>
<comment type="cofactor">
    <cofactor evidence="1">
        <name>Zn(2+)</name>
        <dbReference type="ChEBI" id="CHEBI:29105"/>
    </cofactor>
    <text evidence="1">Binds 1 zinc ion per subunit.</text>
</comment>
<comment type="subunit">
    <text evidence="1">Contains catalytic and regulatory chains.</text>
</comment>
<comment type="similarity">
    <text evidence="1">Belongs to the PyrI family.</text>
</comment>
<evidence type="ECO:0000255" key="1">
    <source>
        <dbReference type="HAMAP-Rule" id="MF_00002"/>
    </source>
</evidence>
<dbReference type="EMBL" id="CP001399">
    <property type="protein sequence ID" value="ACP35631.1"/>
    <property type="molecule type" value="Genomic_DNA"/>
</dbReference>
<dbReference type="RefSeq" id="WP_012711513.1">
    <property type="nucleotide sequence ID" value="NC_012589.1"/>
</dbReference>
<dbReference type="SMR" id="C3MQG8"/>
<dbReference type="GeneID" id="84053119"/>
<dbReference type="KEGG" id="sis:LS215_1627"/>
<dbReference type="HOGENOM" id="CLU_128576_0_0_2"/>
<dbReference type="OrthoDB" id="7000at2157"/>
<dbReference type="Proteomes" id="UP000001747">
    <property type="component" value="Chromosome"/>
</dbReference>
<dbReference type="GO" id="GO:0009347">
    <property type="term" value="C:aspartate carbamoyltransferase complex"/>
    <property type="evidence" value="ECO:0007669"/>
    <property type="project" value="InterPro"/>
</dbReference>
<dbReference type="GO" id="GO:0046872">
    <property type="term" value="F:metal ion binding"/>
    <property type="evidence" value="ECO:0007669"/>
    <property type="project" value="UniProtKB-KW"/>
</dbReference>
<dbReference type="GO" id="GO:0006207">
    <property type="term" value="P:'de novo' pyrimidine nucleobase biosynthetic process"/>
    <property type="evidence" value="ECO:0007669"/>
    <property type="project" value="InterPro"/>
</dbReference>
<dbReference type="GO" id="GO:0006221">
    <property type="term" value="P:pyrimidine nucleotide biosynthetic process"/>
    <property type="evidence" value="ECO:0007669"/>
    <property type="project" value="UniProtKB-UniRule"/>
</dbReference>
<dbReference type="Gene3D" id="2.30.30.20">
    <property type="entry name" value="Aspartate carbamoyltransferase regulatory subunit, C-terminal domain"/>
    <property type="match status" value="1"/>
</dbReference>
<dbReference type="Gene3D" id="3.30.70.140">
    <property type="entry name" value="Aspartate carbamoyltransferase regulatory subunit, N-terminal domain"/>
    <property type="match status" value="1"/>
</dbReference>
<dbReference type="HAMAP" id="MF_00002">
    <property type="entry name" value="Asp_carb_tr_reg"/>
    <property type="match status" value="1"/>
</dbReference>
<dbReference type="InterPro" id="IPR020545">
    <property type="entry name" value="Asp_carbamoyltransf_reg_N"/>
</dbReference>
<dbReference type="InterPro" id="IPR002801">
    <property type="entry name" value="Asp_carbamoylTrfase_reg"/>
</dbReference>
<dbReference type="InterPro" id="IPR020542">
    <property type="entry name" value="Asp_carbamoyltrfase_reg_C"/>
</dbReference>
<dbReference type="InterPro" id="IPR036792">
    <property type="entry name" value="Asp_carbatrfase_reg_C_sf"/>
</dbReference>
<dbReference type="InterPro" id="IPR036793">
    <property type="entry name" value="Asp_carbatrfase_reg_N_sf"/>
</dbReference>
<dbReference type="NCBIfam" id="TIGR00240">
    <property type="entry name" value="ATCase_reg"/>
    <property type="match status" value="1"/>
</dbReference>
<dbReference type="PANTHER" id="PTHR35805">
    <property type="entry name" value="ASPARTATE CARBAMOYLTRANSFERASE REGULATORY CHAIN"/>
    <property type="match status" value="1"/>
</dbReference>
<dbReference type="PANTHER" id="PTHR35805:SF1">
    <property type="entry name" value="ASPARTATE CARBAMOYLTRANSFERASE REGULATORY CHAIN"/>
    <property type="match status" value="1"/>
</dbReference>
<dbReference type="Pfam" id="PF01948">
    <property type="entry name" value="PyrI"/>
    <property type="match status" value="1"/>
</dbReference>
<dbReference type="Pfam" id="PF02748">
    <property type="entry name" value="PyrI_C"/>
    <property type="match status" value="1"/>
</dbReference>
<dbReference type="SUPFAM" id="SSF57825">
    <property type="entry name" value="Aspartate carbamoyltransferase, Regulatory-chain, C-terminal domain"/>
    <property type="match status" value="1"/>
</dbReference>
<dbReference type="SUPFAM" id="SSF54893">
    <property type="entry name" value="Aspartate carbamoyltransferase, Regulatory-chain, N-terminal domain"/>
    <property type="match status" value="1"/>
</dbReference>
<keyword id="KW-0479">Metal-binding</keyword>
<keyword id="KW-0665">Pyrimidine biosynthesis</keyword>
<keyword id="KW-0862">Zinc</keyword>
<accession>C3MQG8</accession>
<gene>
    <name evidence="1" type="primary">pyrI</name>
    <name type="ordered locus">LS215_1627</name>
</gene>
<organism>
    <name type="scientific">Saccharolobus islandicus (strain L.S.2.15 / Lassen #1)</name>
    <name type="common">Sulfolobus islandicus</name>
    <dbReference type="NCBI Taxonomy" id="429572"/>
    <lineage>
        <taxon>Archaea</taxon>
        <taxon>Thermoproteota</taxon>
        <taxon>Thermoprotei</taxon>
        <taxon>Sulfolobales</taxon>
        <taxon>Sulfolobaceae</taxon>
        <taxon>Saccharolobus</taxon>
    </lineage>
</organism>
<feature type="chain" id="PRO_1000201616" description="Aspartate carbamoyltransferase regulatory chain">
    <location>
        <begin position="1"/>
        <end position="159"/>
    </location>
</feature>
<feature type="binding site" evidence="1">
    <location>
        <position position="113"/>
    </location>
    <ligand>
        <name>Zn(2+)</name>
        <dbReference type="ChEBI" id="CHEBI:29105"/>
    </ligand>
</feature>
<feature type="binding site" evidence="1">
    <location>
        <position position="118"/>
    </location>
    <ligand>
        <name>Zn(2+)</name>
        <dbReference type="ChEBI" id="CHEBI:29105"/>
    </ligand>
</feature>
<feature type="binding site" evidence="1">
    <location>
        <position position="142"/>
    </location>
    <ligand>
        <name>Zn(2+)</name>
        <dbReference type="ChEBI" id="CHEBI:29105"/>
    </ligand>
</feature>
<feature type="binding site" evidence="1">
    <location>
        <position position="145"/>
    </location>
    <ligand>
        <name>Zn(2+)</name>
        <dbReference type="ChEBI" id="CHEBI:29105"/>
    </ligand>
</feature>
<sequence>MISSSKRDELIVSKIRKGTVIDHIPAGRALAVLRILGIRGSEGYRVALVMNVESKKIGRKDIVKIEDRVIDEKEASLITLIAPSATINIIRDYVVTEKRHLEVPKQIRGLIKCPNPQCITNNDVEAESRFTTISIKPLKLKCEYCEIYITEEDVIRQIL</sequence>